<gene>
    <name evidence="1" type="primary">rpoC</name>
    <name type="ordered locus">BU033</name>
</gene>
<dbReference type="EC" id="2.7.7.6" evidence="1"/>
<dbReference type="EMBL" id="BA000003">
    <property type="protein sequence ID" value="BAB12760.1"/>
    <property type="molecule type" value="Genomic_DNA"/>
</dbReference>
<dbReference type="RefSeq" id="NP_239874.1">
    <property type="nucleotide sequence ID" value="NC_002528.1"/>
</dbReference>
<dbReference type="RefSeq" id="WP_010895911.1">
    <property type="nucleotide sequence ID" value="NC_002528.1"/>
</dbReference>
<dbReference type="SMR" id="P57145"/>
<dbReference type="STRING" id="563178.BUAP5A_032"/>
<dbReference type="EnsemblBacteria" id="BAB12760">
    <property type="protein sequence ID" value="BAB12760"/>
    <property type="gene ID" value="BAB12760"/>
</dbReference>
<dbReference type="KEGG" id="buc:BU033"/>
<dbReference type="PATRIC" id="fig|107806.10.peg.46"/>
<dbReference type="eggNOG" id="COG0086">
    <property type="taxonomic scope" value="Bacteria"/>
</dbReference>
<dbReference type="HOGENOM" id="CLU_000524_3_1_6"/>
<dbReference type="Proteomes" id="UP000001806">
    <property type="component" value="Chromosome"/>
</dbReference>
<dbReference type="GO" id="GO:0000428">
    <property type="term" value="C:DNA-directed RNA polymerase complex"/>
    <property type="evidence" value="ECO:0007669"/>
    <property type="project" value="UniProtKB-KW"/>
</dbReference>
<dbReference type="GO" id="GO:0003677">
    <property type="term" value="F:DNA binding"/>
    <property type="evidence" value="ECO:0007669"/>
    <property type="project" value="UniProtKB-UniRule"/>
</dbReference>
<dbReference type="GO" id="GO:0003899">
    <property type="term" value="F:DNA-directed RNA polymerase activity"/>
    <property type="evidence" value="ECO:0007669"/>
    <property type="project" value="UniProtKB-UniRule"/>
</dbReference>
<dbReference type="GO" id="GO:0000287">
    <property type="term" value="F:magnesium ion binding"/>
    <property type="evidence" value="ECO:0007669"/>
    <property type="project" value="UniProtKB-UniRule"/>
</dbReference>
<dbReference type="GO" id="GO:0008270">
    <property type="term" value="F:zinc ion binding"/>
    <property type="evidence" value="ECO:0007669"/>
    <property type="project" value="UniProtKB-UniRule"/>
</dbReference>
<dbReference type="GO" id="GO:0006351">
    <property type="term" value="P:DNA-templated transcription"/>
    <property type="evidence" value="ECO:0007669"/>
    <property type="project" value="UniProtKB-UniRule"/>
</dbReference>
<dbReference type="CDD" id="cd02655">
    <property type="entry name" value="RNAP_beta'_C"/>
    <property type="match status" value="1"/>
</dbReference>
<dbReference type="CDD" id="cd01609">
    <property type="entry name" value="RNAP_beta'_N"/>
    <property type="match status" value="1"/>
</dbReference>
<dbReference type="FunFam" id="1.10.132.30:FF:000003">
    <property type="entry name" value="DNA-directed RNA polymerase subunit beta"/>
    <property type="match status" value="1"/>
</dbReference>
<dbReference type="FunFam" id="1.10.150.390:FF:000002">
    <property type="entry name" value="DNA-directed RNA polymerase subunit beta"/>
    <property type="match status" value="1"/>
</dbReference>
<dbReference type="FunFam" id="1.10.40.90:FF:000001">
    <property type="entry name" value="DNA-directed RNA polymerase subunit beta"/>
    <property type="match status" value="1"/>
</dbReference>
<dbReference type="FunFam" id="2.40.50.100:FF:000012">
    <property type="entry name" value="DNA-directed RNA polymerase subunit beta"/>
    <property type="match status" value="1"/>
</dbReference>
<dbReference type="FunFam" id="2.40.50.100:FF:000016">
    <property type="entry name" value="DNA-directed RNA polymerase subunit beta"/>
    <property type="match status" value="1"/>
</dbReference>
<dbReference type="FunFam" id="4.10.860.120:FF:000001">
    <property type="entry name" value="DNA-directed RNA polymerase subunit beta"/>
    <property type="match status" value="1"/>
</dbReference>
<dbReference type="Gene3D" id="1.10.132.30">
    <property type="match status" value="1"/>
</dbReference>
<dbReference type="Gene3D" id="1.10.150.390">
    <property type="match status" value="1"/>
</dbReference>
<dbReference type="Gene3D" id="1.10.1790.20">
    <property type="match status" value="1"/>
</dbReference>
<dbReference type="Gene3D" id="1.10.40.90">
    <property type="match status" value="1"/>
</dbReference>
<dbReference type="Gene3D" id="2.40.40.20">
    <property type="match status" value="1"/>
</dbReference>
<dbReference type="Gene3D" id="2.40.50.100">
    <property type="match status" value="3"/>
</dbReference>
<dbReference type="Gene3D" id="4.10.860.120">
    <property type="entry name" value="RNA polymerase II, clamp domain"/>
    <property type="match status" value="1"/>
</dbReference>
<dbReference type="Gene3D" id="1.10.274.100">
    <property type="entry name" value="RNA polymerase Rpb1, domain 3"/>
    <property type="match status" value="1"/>
</dbReference>
<dbReference type="HAMAP" id="MF_01322">
    <property type="entry name" value="RNApol_bact_RpoC"/>
    <property type="match status" value="1"/>
</dbReference>
<dbReference type="InterPro" id="IPR045867">
    <property type="entry name" value="DNA-dir_RpoC_beta_prime"/>
</dbReference>
<dbReference type="InterPro" id="IPR012754">
    <property type="entry name" value="DNA-dir_RpoC_beta_prime_bact"/>
</dbReference>
<dbReference type="InterPro" id="IPR000722">
    <property type="entry name" value="RNA_pol_asu"/>
</dbReference>
<dbReference type="InterPro" id="IPR006592">
    <property type="entry name" value="RNA_pol_N"/>
</dbReference>
<dbReference type="InterPro" id="IPR007080">
    <property type="entry name" value="RNA_pol_Rpb1_1"/>
</dbReference>
<dbReference type="InterPro" id="IPR007066">
    <property type="entry name" value="RNA_pol_Rpb1_3"/>
</dbReference>
<dbReference type="InterPro" id="IPR042102">
    <property type="entry name" value="RNA_pol_Rpb1_3_sf"/>
</dbReference>
<dbReference type="InterPro" id="IPR007083">
    <property type="entry name" value="RNA_pol_Rpb1_4"/>
</dbReference>
<dbReference type="InterPro" id="IPR007081">
    <property type="entry name" value="RNA_pol_Rpb1_5"/>
</dbReference>
<dbReference type="InterPro" id="IPR044893">
    <property type="entry name" value="RNA_pol_Rpb1_clamp_domain"/>
</dbReference>
<dbReference type="InterPro" id="IPR038120">
    <property type="entry name" value="Rpb1_funnel_sf"/>
</dbReference>
<dbReference type="NCBIfam" id="TIGR02386">
    <property type="entry name" value="rpoC_TIGR"/>
    <property type="match status" value="1"/>
</dbReference>
<dbReference type="PANTHER" id="PTHR19376">
    <property type="entry name" value="DNA-DIRECTED RNA POLYMERASE"/>
    <property type="match status" value="1"/>
</dbReference>
<dbReference type="PANTHER" id="PTHR19376:SF54">
    <property type="entry name" value="DNA-DIRECTED RNA POLYMERASE SUBUNIT BETA"/>
    <property type="match status" value="1"/>
</dbReference>
<dbReference type="Pfam" id="PF04997">
    <property type="entry name" value="RNA_pol_Rpb1_1"/>
    <property type="match status" value="1"/>
</dbReference>
<dbReference type="Pfam" id="PF00623">
    <property type="entry name" value="RNA_pol_Rpb1_2"/>
    <property type="match status" value="2"/>
</dbReference>
<dbReference type="Pfam" id="PF04983">
    <property type="entry name" value="RNA_pol_Rpb1_3"/>
    <property type="match status" value="1"/>
</dbReference>
<dbReference type="Pfam" id="PF05000">
    <property type="entry name" value="RNA_pol_Rpb1_4"/>
    <property type="match status" value="1"/>
</dbReference>
<dbReference type="Pfam" id="PF04998">
    <property type="entry name" value="RNA_pol_Rpb1_5"/>
    <property type="match status" value="1"/>
</dbReference>
<dbReference type="SMART" id="SM00663">
    <property type="entry name" value="RPOLA_N"/>
    <property type="match status" value="1"/>
</dbReference>
<dbReference type="SUPFAM" id="SSF64484">
    <property type="entry name" value="beta and beta-prime subunits of DNA dependent RNA-polymerase"/>
    <property type="match status" value="1"/>
</dbReference>
<feature type="chain" id="PRO_0000067720" description="DNA-directed RNA polymerase subunit beta'">
    <location>
        <begin position="1"/>
        <end position="1407"/>
    </location>
</feature>
<feature type="binding site" evidence="1">
    <location>
        <position position="70"/>
    </location>
    <ligand>
        <name>Zn(2+)</name>
        <dbReference type="ChEBI" id="CHEBI:29105"/>
        <label>1</label>
    </ligand>
</feature>
<feature type="binding site" evidence="1">
    <location>
        <position position="72"/>
    </location>
    <ligand>
        <name>Zn(2+)</name>
        <dbReference type="ChEBI" id="CHEBI:29105"/>
        <label>1</label>
    </ligand>
</feature>
<feature type="binding site" evidence="1">
    <location>
        <position position="85"/>
    </location>
    <ligand>
        <name>Zn(2+)</name>
        <dbReference type="ChEBI" id="CHEBI:29105"/>
        <label>1</label>
    </ligand>
</feature>
<feature type="binding site" evidence="1">
    <location>
        <position position="88"/>
    </location>
    <ligand>
        <name>Zn(2+)</name>
        <dbReference type="ChEBI" id="CHEBI:29105"/>
        <label>1</label>
    </ligand>
</feature>
<feature type="binding site" evidence="1">
    <location>
        <position position="460"/>
    </location>
    <ligand>
        <name>Mg(2+)</name>
        <dbReference type="ChEBI" id="CHEBI:18420"/>
    </ligand>
</feature>
<feature type="binding site" evidence="1">
    <location>
        <position position="462"/>
    </location>
    <ligand>
        <name>Mg(2+)</name>
        <dbReference type="ChEBI" id="CHEBI:18420"/>
    </ligand>
</feature>
<feature type="binding site" evidence="1">
    <location>
        <position position="464"/>
    </location>
    <ligand>
        <name>Mg(2+)</name>
        <dbReference type="ChEBI" id="CHEBI:18420"/>
    </ligand>
</feature>
<feature type="binding site" evidence="1">
    <location>
        <position position="814"/>
    </location>
    <ligand>
        <name>Zn(2+)</name>
        <dbReference type="ChEBI" id="CHEBI:29105"/>
        <label>2</label>
    </ligand>
</feature>
<feature type="binding site" evidence="1">
    <location>
        <position position="888"/>
    </location>
    <ligand>
        <name>Zn(2+)</name>
        <dbReference type="ChEBI" id="CHEBI:29105"/>
        <label>2</label>
    </ligand>
</feature>
<feature type="binding site" evidence="1">
    <location>
        <position position="895"/>
    </location>
    <ligand>
        <name>Zn(2+)</name>
        <dbReference type="ChEBI" id="CHEBI:29105"/>
        <label>2</label>
    </ligand>
</feature>
<feature type="binding site" evidence="1">
    <location>
        <position position="898"/>
    </location>
    <ligand>
        <name>Zn(2+)</name>
        <dbReference type="ChEBI" id="CHEBI:29105"/>
        <label>2</label>
    </ligand>
</feature>
<sequence>MKDLLKFLKSQTKNEDFDAIKISLASPDMIRSWSFGEVKKPETINYRTFKPERDGLFCARIFGPVKDYECLCGKYKRLKHRGVICEKCGVEVTQSKVRRERMGHIELSSPTAHIWFLKSLPSRIGLLLDMPLRDIERVLYFESYVVIETGMTNLEKRQILTEEQYLDSLEEFGDEFHATMGAEAIQFLLKDINLVQECNVLRIELNETNSETKRKKLTKRIKLLESFIQSHNKPEWMILNVLPVLPPDLRPLVPLDGGRFATSDLNDLYRRVINRNNRLKRLLDLAAPDIIVRNEKRMLQEAVDALLDNGRRGRAITGSNKRPLKSLADMIKGKQGRFRQNLLGKRVDYSGRSVITVGPYLHLHQCGLPKKMALELFKPFIYGKLEVRGLATTIKAAKKMVEREEAIVWDILDEVIREHPVLLNRAPTLHRLGIQAFEPVLIEGKAIQLHPLVCAAYNADFDGDQMAVHVPLTLESQLEARALMMSTNNILSPANGEPIIVPSQDVVLGLYYMTREKINGKGEGMLLNGSNEAEKVYRLGIAELHSLVKVRIIEYKKNEDKSFTAIKKIIPTTIGRAILWMIIPKGLPFSIVNQTLGKKDISKMLNTCYRILGLKSTVFFADQIMYTGFAYAARSGASVGIDDMVIPEKKANIINEAEIEVAEIQEQFQSGLVTAGERYNKVIDIWAAANERVAKAMMQNLSTESVINKKGYKQKQISFNSIFMMADSGARGSAAQIRQLAGMRGLMAKPDGSIIETPITANFREGLNVLQYFISTHGARKGLADTALKTANSGYLTRRLVDVAQDLVVTQDDCRTHEGILMTPLIEGGDVKEPLRERVLGRVTAENIIIPNTKNILIKRNTLLNEKWCDLLEHNSIDNVKVRSVVNCDTDFGVCAYCYGRDLARGNLVNKGEAIGVIAAQSIGEPGTQLTMRTFHIGGAASRAAAESSIQVKNQGIINLNNAKFVINSAGKTVITSRNVELNIIDNFGRTKESYKVPYGAIMAKGDGEKVHSGETVAKWDPHTMPVITEVNGLVRFVDMIDGQSITRQADELTGLSSIVILDTAERMSSGKDLRPALKIIDCNGNDVLISGTDMPAQYFLPGKAIVQLDDGVQISSGDTLARVPQESGGTKDITGGLPRVADLFEARRPKELAILAEISGIISFGKETKGKRRLVITPVDGSDSYEEMIPKWRQLNVFEGERVDRGDVISDGPESPHDILRLRGVQAVTRYIVNEVQEVYRLQGVKINDKHIEVIIRQMLRKATVVKSRDSDFLEGEQVEFSHIKISNRMLDKKKKMPATFSRDLLGITKASLATESFISAASFQETTRVLTESAVAGKRDELRGLKENVIVGRLIPAGTGYAYHKERLNRRQKKHNNPTVSSSQISAEEASASLSELLNSALIEK</sequence>
<protein>
    <recommendedName>
        <fullName evidence="1">DNA-directed RNA polymerase subunit beta'</fullName>
        <shortName evidence="1">RNAP subunit beta'</shortName>
        <ecNumber evidence="1">2.7.7.6</ecNumber>
    </recommendedName>
    <alternativeName>
        <fullName evidence="1">RNA polymerase subunit beta'</fullName>
    </alternativeName>
    <alternativeName>
        <fullName evidence="1">Transcriptase subunit beta'</fullName>
    </alternativeName>
</protein>
<name>RPOC_BUCAI</name>
<comment type="function">
    <text evidence="1">DNA-dependent RNA polymerase catalyzes the transcription of DNA into RNA using the four ribonucleoside triphosphates as substrates.</text>
</comment>
<comment type="catalytic activity">
    <reaction evidence="1">
        <text>RNA(n) + a ribonucleoside 5'-triphosphate = RNA(n+1) + diphosphate</text>
        <dbReference type="Rhea" id="RHEA:21248"/>
        <dbReference type="Rhea" id="RHEA-COMP:14527"/>
        <dbReference type="Rhea" id="RHEA-COMP:17342"/>
        <dbReference type="ChEBI" id="CHEBI:33019"/>
        <dbReference type="ChEBI" id="CHEBI:61557"/>
        <dbReference type="ChEBI" id="CHEBI:140395"/>
        <dbReference type="EC" id="2.7.7.6"/>
    </reaction>
</comment>
<comment type="cofactor">
    <cofactor evidence="1">
        <name>Mg(2+)</name>
        <dbReference type="ChEBI" id="CHEBI:18420"/>
    </cofactor>
    <text evidence="1">Binds 1 Mg(2+) ion per subunit.</text>
</comment>
<comment type="cofactor">
    <cofactor evidence="1">
        <name>Zn(2+)</name>
        <dbReference type="ChEBI" id="CHEBI:29105"/>
    </cofactor>
    <text evidence="1">Binds 2 Zn(2+) ions per subunit.</text>
</comment>
<comment type="subunit">
    <text evidence="1">The RNAP catalytic core consists of 2 alpha, 1 beta, 1 beta' and 1 omega subunit. When a sigma factor is associated with the core the holoenzyme is formed, which can initiate transcription.</text>
</comment>
<comment type="similarity">
    <text evidence="1">Belongs to the RNA polymerase beta' chain family.</text>
</comment>
<organism>
    <name type="scientific">Buchnera aphidicola subsp. Acyrthosiphon pisum (strain APS)</name>
    <name type="common">Acyrthosiphon pisum symbiotic bacterium</name>
    <dbReference type="NCBI Taxonomy" id="107806"/>
    <lineage>
        <taxon>Bacteria</taxon>
        <taxon>Pseudomonadati</taxon>
        <taxon>Pseudomonadota</taxon>
        <taxon>Gammaproteobacteria</taxon>
        <taxon>Enterobacterales</taxon>
        <taxon>Erwiniaceae</taxon>
        <taxon>Buchnera</taxon>
    </lineage>
</organism>
<reference key="1">
    <citation type="journal article" date="2000" name="Nature">
        <title>Genome sequence of the endocellular bacterial symbiont of aphids Buchnera sp. APS.</title>
        <authorList>
            <person name="Shigenobu S."/>
            <person name="Watanabe H."/>
            <person name="Hattori M."/>
            <person name="Sakaki Y."/>
            <person name="Ishikawa H."/>
        </authorList>
    </citation>
    <scope>NUCLEOTIDE SEQUENCE [LARGE SCALE GENOMIC DNA]</scope>
    <source>
        <strain>APS</strain>
    </source>
</reference>
<evidence type="ECO:0000255" key="1">
    <source>
        <dbReference type="HAMAP-Rule" id="MF_01322"/>
    </source>
</evidence>
<proteinExistence type="inferred from homology"/>
<keyword id="KW-0240">DNA-directed RNA polymerase</keyword>
<keyword id="KW-0460">Magnesium</keyword>
<keyword id="KW-0479">Metal-binding</keyword>
<keyword id="KW-0548">Nucleotidyltransferase</keyword>
<keyword id="KW-1185">Reference proteome</keyword>
<keyword id="KW-0804">Transcription</keyword>
<keyword id="KW-0808">Transferase</keyword>
<keyword id="KW-0862">Zinc</keyword>
<accession>P57145</accession>